<comment type="function">
    <text evidence="2">Has antibacterial activity against Gram-negative bacterium E.coli ATCC 25922 (MIC=300 uM) but not against S.pneumoniae ATCC 700603, S.choleraesuis ATCC 14028 or Gram-positive bacterium S.aureus ATCC 29313. Shows very little hemolytic activity and no cytotoxicity.</text>
</comment>
<comment type="subcellular location">
    <subcellularLocation>
        <location evidence="2">Secreted</location>
    </subcellularLocation>
</comment>
<comment type="tissue specificity">
    <text evidence="5">Expressed by the skin glands.</text>
</comment>
<comment type="mass spectrometry"/>
<comment type="similarity">
    <text evidence="4">Belongs to the frog skin active peptide (FSAP) family. Ocellatin subfamily.</text>
</comment>
<organism>
    <name type="scientific">Leptodactylus pustulatus</name>
    <name type="common">Ceara white-lipped frog</name>
    <dbReference type="NCBI Taxonomy" id="1349691"/>
    <lineage>
        <taxon>Eukaryota</taxon>
        <taxon>Metazoa</taxon>
        <taxon>Chordata</taxon>
        <taxon>Craniata</taxon>
        <taxon>Vertebrata</taxon>
        <taxon>Euteleostomi</taxon>
        <taxon>Amphibia</taxon>
        <taxon>Batrachia</taxon>
        <taxon>Anura</taxon>
        <taxon>Neobatrachia</taxon>
        <taxon>Hyloidea</taxon>
        <taxon>Leptodactylidae</taxon>
        <taxon>Leptodactylinae</taxon>
        <taxon>Leptodactylus</taxon>
    </lineage>
</organism>
<feature type="signal peptide" evidence="1">
    <location>
        <begin position="1"/>
        <end position="22"/>
    </location>
</feature>
<feature type="propeptide" id="PRO_0000436216" evidence="4">
    <location>
        <begin position="23"/>
        <end position="39"/>
    </location>
</feature>
<feature type="peptide" id="PRO_0000436217" description="Ocellatin-PT5" evidence="2">
    <location>
        <begin position="42"/>
        <end position="66"/>
    </location>
</feature>
<feature type="modified residue" description="Valine amide" evidence="2">
    <location>
        <position position="66"/>
    </location>
</feature>
<proteinExistence type="evidence at protein level"/>
<reference evidence="4" key="1">
    <citation type="journal article" date="2015" name="J. Nat. Prod.">
        <title>Characterization and biological activities of ocellatin peptides from the skin secretion of the frog Leptodactylus pustulatus.</title>
        <authorList>
            <person name="Marani M.M."/>
            <person name="Dourado F.S."/>
            <person name="Quelemes P.V."/>
            <person name="de Araujo A.R."/>
            <person name="Perfeito M.L."/>
            <person name="Barbosa E.A."/>
            <person name="Veras L.M."/>
            <person name="Coelho A.L."/>
            <person name="Andrade E.B."/>
            <person name="Eaton P."/>
            <person name="Longo J.P."/>
            <person name="Azevedo R.B."/>
            <person name="Delerue-Matos C."/>
            <person name="Leite J.R."/>
        </authorList>
    </citation>
    <scope>NUCLEOTIDE SEQUENCE [MRNA]</scope>
    <scope>PROTEIN SEQUENCE OF 42-66</scope>
    <scope>FUNCTION</scope>
    <scope>SUBCELLULAR LOCATION</scope>
    <scope>MASS SPECTROMETRY</scope>
    <scope>AMIDATION AT VAL-66</scope>
    <scope>IDENTIFICATION BY MASS SPECTROMETRY</scope>
    <source>
        <tissue evidence="3">Skin secretion</tissue>
    </source>
</reference>
<dbReference type="GO" id="GO:0005576">
    <property type="term" value="C:extracellular region"/>
    <property type="evidence" value="ECO:0007669"/>
    <property type="project" value="UniProtKB-SubCell"/>
</dbReference>
<dbReference type="GO" id="GO:0042742">
    <property type="term" value="P:defense response to bacterium"/>
    <property type="evidence" value="ECO:0007669"/>
    <property type="project" value="UniProtKB-KW"/>
</dbReference>
<dbReference type="InterPro" id="IPR004275">
    <property type="entry name" value="Frog_antimicrobial_propeptide"/>
</dbReference>
<dbReference type="InterPro" id="IPR016322">
    <property type="entry name" value="FSAP"/>
</dbReference>
<dbReference type="Pfam" id="PF03032">
    <property type="entry name" value="FSAP_sig_propep"/>
    <property type="match status" value="1"/>
</dbReference>
<dbReference type="PIRSF" id="PIRSF001822">
    <property type="entry name" value="Dermaseptin_precursor"/>
    <property type="match status" value="1"/>
</dbReference>
<sequence>MAFLKKSLFLVLFLGLVSLSICDEEKRQDEDDDDDDDEEKRGVFDIIKDAGRQLVAHAMGKIAEKV</sequence>
<protein>
    <recommendedName>
        <fullName evidence="3">Ocellatin-PT5</fullName>
    </recommendedName>
</protein>
<accession>C0HK00</accession>
<evidence type="ECO:0000255" key="1"/>
<evidence type="ECO:0000269" key="2">
    <source>
    </source>
</evidence>
<evidence type="ECO:0000303" key="3">
    <source>
    </source>
</evidence>
<evidence type="ECO:0000305" key="4"/>
<evidence type="ECO:0000305" key="5">
    <source>
    </source>
</evidence>
<name>OCE5_LEPPU</name>
<keyword id="KW-0027">Amidation</keyword>
<keyword id="KW-0878">Amphibian defense peptide</keyword>
<keyword id="KW-0044">Antibiotic</keyword>
<keyword id="KW-0929">Antimicrobial</keyword>
<keyword id="KW-0165">Cleavage on pair of basic residues</keyword>
<keyword id="KW-0903">Direct protein sequencing</keyword>
<keyword id="KW-0964">Secreted</keyword>
<keyword id="KW-0732">Signal</keyword>